<comment type="function">
    <text evidence="2">In the soluble state, catalyzes glutaredoxin-like thiol disulfide exchange reactions with reduced glutathione as electron donor. Reduces selenite and dehydroascorbate and may act as an antioxidant during oxidative stress response (By similarity). Can insert into membranes and form voltage-dependent multi-ion conductive channels. Membrane insertion seems to be redox-regulated and may occur only under oxidizing conditions. Involved in regulation of the cell cycle (By similarity).</text>
</comment>
<comment type="catalytic activity">
    <reaction evidence="2">
        <text>L-dehydroascorbate + 2 glutathione = glutathione disulfide + L-ascorbate</text>
        <dbReference type="Rhea" id="RHEA:24424"/>
        <dbReference type="ChEBI" id="CHEBI:38290"/>
        <dbReference type="ChEBI" id="CHEBI:57925"/>
        <dbReference type="ChEBI" id="CHEBI:58297"/>
        <dbReference type="ChEBI" id="CHEBI:58539"/>
        <dbReference type="EC" id="1.8.5.1"/>
    </reaction>
    <physiologicalReaction direction="left-to-right" evidence="2">
        <dbReference type="Rhea" id="RHEA:24425"/>
    </physiologicalReaction>
</comment>
<comment type="catalytic activity">
    <reaction evidence="2">
        <text>chloride(in) = chloride(out)</text>
        <dbReference type="Rhea" id="RHEA:29823"/>
        <dbReference type="ChEBI" id="CHEBI:17996"/>
    </reaction>
</comment>
<comment type="catalytic activity">
    <reaction evidence="2">
        <text>iodide(out) = iodide(in)</text>
        <dbReference type="Rhea" id="RHEA:66324"/>
        <dbReference type="ChEBI" id="CHEBI:16382"/>
    </reaction>
</comment>
<comment type="catalytic activity">
    <reaction evidence="2">
        <text>thiocyanate(in) = thiocyanate(out)</text>
        <dbReference type="Rhea" id="RHEA:75347"/>
        <dbReference type="ChEBI" id="CHEBI:18022"/>
    </reaction>
</comment>
<comment type="catalytic activity">
    <reaction evidence="2">
        <text>nitrate(in) = nitrate(out)</text>
        <dbReference type="Rhea" id="RHEA:34923"/>
        <dbReference type="ChEBI" id="CHEBI:17632"/>
    </reaction>
</comment>
<comment type="catalytic activity">
    <reaction evidence="2">
        <text>bromide(in) = bromide(out)</text>
        <dbReference type="Rhea" id="RHEA:75383"/>
        <dbReference type="ChEBI" id="CHEBI:15858"/>
    </reaction>
</comment>
<comment type="catalytic activity">
    <reaction evidence="2">
        <text>fluoride(in) = fluoride(out)</text>
        <dbReference type="Rhea" id="RHEA:76159"/>
        <dbReference type="ChEBI" id="CHEBI:17051"/>
    </reaction>
</comment>
<comment type="subunit">
    <text evidence="1">Monomer. Homodimer (in vitro). Interacts with TRAPPC2. Dimerization requires a conformation change that leads to the exposure of a large hydrophobic surface. In vivo, this may lead to membrane insertion (By similarity).</text>
</comment>
<comment type="subcellular location">
    <subcellularLocation>
        <location evidence="2">Nucleus</location>
    </subcellularLocation>
    <subcellularLocation>
        <location evidence="2">Nucleus membrane</location>
        <topology evidence="2">Single-pass membrane protein</topology>
    </subcellularLocation>
    <subcellularLocation>
        <location evidence="2">Cytoplasm</location>
    </subcellularLocation>
    <subcellularLocation>
        <location evidence="2">Cell membrane</location>
        <topology evidence="2">Single-pass membrane protein</topology>
    </subcellularLocation>
    <subcellularLocation>
        <location evidence="3">Endoplasmic reticulum</location>
    </subcellularLocation>
    <text evidence="2 3">Mostly in the nucleus including in the nuclear membrane. Small amount in the cytoplasm and the plasma membrane. Exists both as soluble cytoplasmic protein and as membrane protein with probably a single transmembrane domain (By similarity). Might not be present in the nucleus of cardiac cells (By similarity).</text>
</comment>
<comment type="domain">
    <text evidence="2">The active G-site contains a monothiol Cys-X-X-Ser motif which mediates glutathione-dependent redox catalysis.</text>
</comment>
<comment type="domain">
    <text evidence="2">Members of this family may change from a globular, soluble state to a state where the N-terminal domain is inserted into the membrane and functions as a channel. The redox status of the active cysteine in Cys-X-X-Cys/Ser motif likely determines the capacity to adopt a soluble or membrane-inserted state. A conformation change of the N-terminal domain is thought to expose hydrophobic surfaces that trigger membrane insertion.</text>
</comment>
<comment type="similarity">
    <text evidence="7">Belongs to the chloride channel CLIC family.</text>
</comment>
<sequence length="241" mass="26925">MAEEQPQVELFVKAGSDGAKIGNCPFSQRLFMVLWLKGVTFNVTTVDTKRRTETVHKLCPGGQLPFLLYGTEVHTDTNKIEEFLEAVLCPPRYPKLAALNPESNTAGVDIFAKFSAYIKNSNPALNDNLEKGLLKALKILDNYLTSPLPEEVDETSAEDEGISQRKFLDGNELTLADCNLLPKLHIVQVVCKKNRGFTIPEVFRGVHRYLSNAYAREEFASTCPDDEEIELAYEQVAKALK</sequence>
<reference key="1">
    <citation type="submission" date="2001-05" db="EMBL/GenBank/DDBJ databases">
        <title>A-kinase anchoring protein 350 (AKAP350) interacts with the chloride intracellular channel (CLIC) protein family.</title>
        <authorList>
            <person name="Shanks R.A."/>
            <person name="Berryman M."/>
            <person name="Edwards J.C."/>
            <person name="Urushidani T."/>
            <person name="Navarre J."/>
            <person name="Goldenring J.R."/>
        </authorList>
    </citation>
    <scope>NUCLEOTIDE SEQUENCE [MRNA]</scope>
</reference>
<accession>Q95MF9</accession>
<dbReference type="EC" id="1.8.-.-" evidence="2"/>
<dbReference type="EC" id="1.8.5.1" evidence="2"/>
<dbReference type="EMBL" id="AF387765">
    <property type="protein sequence ID" value="AAK67356.1"/>
    <property type="molecule type" value="mRNA"/>
</dbReference>
<dbReference type="RefSeq" id="NP_001075580.1">
    <property type="nucleotide sequence ID" value="NM_001082111.1"/>
</dbReference>
<dbReference type="SMR" id="Q95MF9"/>
<dbReference type="FunCoup" id="Q95MF9">
    <property type="interactions" value="1218"/>
</dbReference>
<dbReference type="STRING" id="9986.ENSOCUP00000024290"/>
<dbReference type="PaxDb" id="9986-ENSOCUP00000024290"/>
<dbReference type="GeneID" id="100008817"/>
<dbReference type="KEGG" id="ocu:100008817"/>
<dbReference type="CTD" id="1192"/>
<dbReference type="eggNOG" id="KOG1422">
    <property type="taxonomic scope" value="Eukaryota"/>
</dbReference>
<dbReference type="InParanoid" id="Q95MF9"/>
<dbReference type="OrthoDB" id="1935530at2759"/>
<dbReference type="Proteomes" id="UP000001811">
    <property type="component" value="Unplaced"/>
</dbReference>
<dbReference type="GO" id="GO:0034707">
    <property type="term" value="C:chloride channel complex"/>
    <property type="evidence" value="ECO:0007669"/>
    <property type="project" value="UniProtKB-KW"/>
</dbReference>
<dbReference type="GO" id="GO:0005737">
    <property type="term" value="C:cytoplasm"/>
    <property type="evidence" value="ECO:0000250"/>
    <property type="project" value="UniProtKB"/>
</dbReference>
<dbReference type="GO" id="GO:0005783">
    <property type="term" value="C:endoplasmic reticulum"/>
    <property type="evidence" value="ECO:0007669"/>
    <property type="project" value="UniProtKB-SubCell"/>
</dbReference>
<dbReference type="GO" id="GO:0031965">
    <property type="term" value="C:nuclear membrane"/>
    <property type="evidence" value="ECO:0007669"/>
    <property type="project" value="UniProtKB-SubCell"/>
</dbReference>
<dbReference type="GO" id="GO:0005886">
    <property type="term" value="C:plasma membrane"/>
    <property type="evidence" value="ECO:0007669"/>
    <property type="project" value="UniProtKB-SubCell"/>
</dbReference>
<dbReference type="GO" id="GO:0005254">
    <property type="term" value="F:chloride channel activity"/>
    <property type="evidence" value="ECO:0007669"/>
    <property type="project" value="UniProtKB-KW"/>
</dbReference>
<dbReference type="GO" id="GO:0016491">
    <property type="term" value="F:oxidoreductase activity"/>
    <property type="evidence" value="ECO:0007669"/>
    <property type="project" value="UniProtKB-KW"/>
</dbReference>
<dbReference type="CDD" id="cd10300">
    <property type="entry name" value="GST_C_CLIC1"/>
    <property type="match status" value="1"/>
</dbReference>
<dbReference type="CDD" id="cd03061">
    <property type="entry name" value="GST_N_CLIC"/>
    <property type="match status" value="1"/>
</dbReference>
<dbReference type="FunFam" id="1.20.1050.10:FF:000001">
    <property type="entry name" value="Chloride intracellular channel 2"/>
    <property type="match status" value="1"/>
</dbReference>
<dbReference type="FunFam" id="3.40.30.10:FF:000129">
    <property type="entry name" value="Chloride intracellular channel protein 1"/>
    <property type="match status" value="1"/>
</dbReference>
<dbReference type="Gene3D" id="1.20.1050.10">
    <property type="match status" value="1"/>
</dbReference>
<dbReference type="Gene3D" id="3.40.30.10">
    <property type="entry name" value="Glutaredoxin"/>
    <property type="match status" value="1"/>
</dbReference>
<dbReference type="InterPro" id="IPR002946">
    <property type="entry name" value="CLIC"/>
</dbReference>
<dbReference type="InterPro" id="IPR030259">
    <property type="entry name" value="CLIC-1_C"/>
</dbReference>
<dbReference type="InterPro" id="IPR053823">
    <property type="entry name" value="CLIC_N"/>
</dbReference>
<dbReference type="InterPro" id="IPR010987">
    <property type="entry name" value="Glutathione-S-Trfase_C-like"/>
</dbReference>
<dbReference type="InterPro" id="IPR036282">
    <property type="entry name" value="Glutathione-S-Trfase_C_sf"/>
</dbReference>
<dbReference type="InterPro" id="IPR040079">
    <property type="entry name" value="Glutathione_S-Trfase"/>
</dbReference>
<dbReference type="InterPro" id="IPR036249">
    <property type="entry name" value="Thioredoxin-like_sf"/>
</dbReference>
<dbReference type="NCBIfam" id="TIGR00862">
    <property type="entry name" value="O-ClC"/>
    <property type="match status" value="1"/>
</dbReference>
<dbReference type="PANTHER" id="PTHR45476:SF2">
    <property type="entry name" value="CHLORIDE INTRACELLULAR CHANNEL PROTEIN"/>
    <property type="match status" value="1"/>
</dbReference>
<dbReference type="PANTHER" id="PTHR45476">
    <property type="entry name" value="CHLORIDE INTRACELLULAR CHANNEL PROTEIN 6-RELATED"/>
    <property type="match status" value="1"/>
</dbReference>
<dbReference type="Pfam" id="PF22441">
    <property type="entry name" value="CLIC-like_N"/>
    <property type="match status" value="1"/>
</dbReference>
<dbReference type="Pfam" id="PF13410">
    <property type="entry name" value="GST_C_2"/>
    <property type="match status" value="1"/>
</dbReference>
<dbReference type="PRINTS" id="PR01263">
    <property type="entry name" value="INTCLCHANNEL"/>
</dbReference>
<dbReference type="SFLD" id="SFLDS00019">
    <property type="entry name" value="Glutathione_Transferase_(cytos"/>
    <property type="match status" value="1"/>
</dbReference>
<dbReference type="SFLD" id="SFLDG00358">
    <property type="entry name" value="Main_(cytGST)"/>
    <property type="match status" value="1"/>
</dbReference>
<dbReference type="SUPFAM" id="SSF47616">
    <property type="entry name" value="GST C-terminal domain-like"/>
    <property type="match status" value="1"/>
</dbReference>
<dbReference type="SUPFAM" id="SSF52833">
    <property type="entry name" value="Thioredoxin-like"/>
    <property type="match status" value="1"/>
</dbReference>
<dbReference type="PROSITE" id="PS50405">
    <property type="entry name" value="GST_CTER"/>
    <property type="match status" value="1"/>
</dbReference>
<feature type="initiator methionine" description="Removed" evidence="2">
    <location>
        <position position="1"/>
    </location>
</feature>
<feature type="chain" id="PRO_0000144204" description="Chloride intracellular channel protein 1">
    <location>
        <begin position="2"/>
        <end position="241"/>
    </location>
</feature>
<feature type="transmembrane region" description="Helical; Note=After insertion into the membrane" evidence="5">
    <location>
        <begin position="26"/>
        <end position="46"/>
    </location>
</feature>
<feature type="domain" description="GST C-terminal" evidence="6">
    <location>
        <begin position="93"/>
        <end position="233"/>
    </location>
</feature>
<feature type="region of interest" description="Required for insertion into the membrane" evidence="1">
    <location>
        <begin position="2"/>
        <end position="90"/>
    </location>
</feature>
<feature type="short sequence motif" description="G-site" evidence="2">
    <location>
        <begin position="24"/>
        <end position="27"/>
    </location>
</feature>
<feature type="modified residue" description="N-acetylalanine" evidence="2">
    <location>
        <position position="2"/>
    </location>
</feature>
<feature type="modified residue" description="N6-acetyllysine" evidence="2">
    <location>
        <position position="13"/>
    </location>
</feature>
<feature type="modified residue" description="N6-acetyllysine" evidence="2">
    <location>
        <position position="119"/>
    </location>
</feature>
<feature type="modified residue" description="Phosphoserine" evidence="2">
    <location>
        <position position="121"/>
    </location>
</feature>
<feature type="modified residue" description="N6-acetyllysine" evidence="2">
    <location>
        <position position="131"/>
    </location>
</feature>
<feature type="modified residue" description="Phosphoserine" evidence="2">
    <location>
        <position position="156"/>
    </location>
</feature>
<feature type="modified residue" description="Phosphoserine" evidence="2">
    <location>
        <position position="211"/>
    </location>
</feature>
<feature type="modified residue" description="Phosphotyrosine" evidence="4">
    <location>
        <position position="233"/>
    </location>
</feature>
<feature type="disulfide bond" evidence="1">
    <location>
        <begin position="24"/>
        <end position="59"/>
    </location>
</feature>
<protein>
    <recommendedName>
        <fullName>Chloride intracellular channel protein 1</fullName>
    </recommendedName>
    <alternativeName>
        <fullName evidence="2">Glutaredoxin-like oxidoreductase CLIC1</fullName>
        <ecNumber evidence="2">1.8.-.-</ecNumber>
    </alternativeName>
    <alternativeName>
        <fullName evidence="2">Glutathione-dependent dehydroascorbate reductase CLIC1</fullName>
        <ecNumber evidence="2">1.8.5.1</ecNumber>
    </alternativeName>
</protein>
<name>CLIC1_RABIT</name>
<keyword id="KW-0007">Acetylation</keyword>
<keyword id="KW-1003">Cell membrane</keyword>
<keyword id="KW-0868">Chloride</keyword>
<keyword id="KW-0869">Chloride channel</keyword>
<keyword id="KW-0963">Cytoplasm</keyword>
<keyword id="KW-1015">Disulfide bond</keyword>
<keyword id="KW-0256">Endoplasmic reticulum</keyword>
<keyword id="KW-0407">Ion channel</keyword>
<keyword id="KW-0406">Ion transport</keyword>
<keyword id="KW-0472">Membrane</keyword>
<keyword id="KW-0539">Nucleus</keyword>
<keyword id="KW-0560">Oxidoreductase</keyword>
<keyword id="KW-0597">Phosphoprotein</keyword>
<keyword id="KW-1185">Reference proteome</keyword>
<keyword id="KW-0812">Transmembrane</keyword>
<keyword id="KW-1133">Transmembrane helix</keyword>
<keyword id="KW-0813">Transport</keyword>
<keyword id="KW-0851">Voltage-gated channel</keyword>
<gene>
    <name type="primary">CLIC1</name>
</gene>
<evidence type="ECO:0000250" key="1"/>
<evidence type="ECO:0000250" key="2">
    <source>
        <dbReference type="UniProtKB" id="O00299"/>
    </source>
</evidence>
<evidence type="ECO:0000250" key="3">
    <source>
        <dbReference type="UniProtKB" id="Q6MG61"/>
    </source>
</evidence>
<evidence type="ECO:0000250" key="4">
    <source>
        <dbReference type="UniProtKB" id="Q9Z1Q5"/>
    </source>
</evidence>
<evidence type="ECO:0000255" key="5"/>
<evidence type="ECO:0000255" key="6">
    <source>
        <dbReference type="PROSITE-ProRule" id="PRU00685"/>
    </source>
</evidence>
<evidence type="ECO:0000305" key="7"/>
<proteinExistence type="evidence at transcript level"/>
<organism>
    <name type="scientific">Oryctolagus cuniculus</name>
    <name type="common">Rabbit</name>
    <dbReference type="NCBI Taxonomy" id="9986"/>
    <lineage>
        <taxon>Eukaryota</taxon>
        <taxon>Metazoa</taxon>
        <taxon>Chordata</taxon>
        <taxon>Craniata</taxon>
        <taxon>Vertebrata</taxon>
        <taxon>Euteleostomi</taxon>
        <taxon>Mammalia</taxon>
        <taxon>Eutheria</taxon>
        <taxon>Euarchontoglires</taxon>
        <taxon>Glires</taxon>
        <taxon>Lagomorpha</taxon>
        <taxon>Leporidae</taxon>
        <taxon>Oryctolagus</taxon>
    </lineage>
</organism>